<reference key="1">
    <citation type="journal article" date="2010" name="J. Bacteriol.">
        <title>The genetic basis of laboratory adaptation in Caulobacter crescentus.</title>
        <authorList>
            <person name="Marks M.E."/>
            <person name="Castro-Rojas C.M."/>
            <person name="Teiling C."/>
            <person name="Du L."/>
            <person name="Kapatral V."/>
            <person name="Walunas T.L."/>
            <person name="Crosson S."/>
        </authorList>
    </citation>
    <scope>NUCLEOTIDE SEQUENCE [LARGE SCALE GENOMIC DNA]</scope>
    <source>
        <strain>NA1000 / CB15N</strain>
    </source>
</reference>
<feature type="chain" id="PRO_1000197483" description="UPF0060 membrane protein CCNA_02055">
    <location>
        <begin position="1"/>
        <end position="108"/>
    </location>
</feature>
<feature type="transmembrane region" description="Helical" evidence="1">
    <location>
        <begin position="4"/>
        <end position="24"/>
    </location>
</feature>
<feature type="transmembrane region" description="Helical" evidence="1">
    <location>
        <begin position="27"/>
        <end position="47"/>
    </location>
</feature>
<feature type="transmembrane region" description="Helical" evidence="1">
    <location>
        <begin position="59"/>
        <end position="79"/>
    </location>
</feature>
<feature type="transmembrane region" description="Helical" evidence="1">
    <location>
        <begin position="85"/>
        <end position="105"/>
    </location>
</feature>
<accession>B8GX30</accession>
<evidence type="ECO:0000255" key="1">
    <source>
        <dbReference type="HAMAP-Rule" id="MF_00010"/>
    </source>
</evidence>
<dbReference type="EMBL" id="CP001340">
    <property type="protein sequence ID" value="ACL95520.1"/>
    <property type="molecule type" value="Genomic_DNA"/>
</dbReference>
<dbReference type="RefSeq" id="WP_010919842.1">
    <property type="nucleotide sequence ID" value="NC_011916.1"/>
</dbReference>
<dbReference type="RefSeq" id="YP_002517428.1">
    <property type="nucleotide sequence ID" value="NC_011916.1"/>
</dbReference>
<dbReference type="SMR" id="B8GX30"/>
<dbReference type="GeneID" id="7333387"/>
<dbReference type="KEGG" id="ccs:CCNA_02055"/>
<dbReference type="PATRIC" id="fig|565050.3.peg.2013"/>
<dbReference type="HOGENOM" id="CLU_117653_1_0_5"/>
<dbReference type="OrthoDB" id="123240at2"/>
<dbReference type="PhylomeDB" id="B8GX30"/>
<dbReference type="Proteomes" id="UP000001364">
    <property type="component" value="Chromosome"/>
</dbReference>
<dbReference type="GO" id="GO:0005886">
    <property type="term" value="C:plasma membrane"/>
    <property type="evidence" value="ECO:0007669"/>
    <property type="project" value="UniProtKB-SubCell"/>
</dbReference>
<dbReference type="HAMAP" id="MF_00010">
    <property type="entry name" value="UPF0060"/>
    <property type="match status" value="1"/>
</dbReference>
<dbReference type="InterPro" id="IPR003844">
    <property type="entry name" value="UPF0060"/>
</dbReference>
<dbReference type="NCBIfam" id="NF002586">
    <property type="entry name" value="PRK02237.1"/>
    <property type="match status" value="1"/>
</dbReference>
<dbReference type="PANTHER" id="PTHR36116">
    <property type="entry name" value="UPF0060 MEMBRANE PROTEIN YNFA"/>
    <property type="match status" value="1"/>
</dbReference>
<dbReference type="PANTHER" id="PTHR36116:SF1">
    <property type="entry name" value="UPF0060 MEMBRANE PROTEIN YNFA"/>
    <property type="match status" value="1"/>
</dbReference>
<dbReference type="Pfam" id="PF02694">
    <property type="entry name" value="UPF0060"/>
    <property type="match status" value="1"/>
</dbReference>
<dbReference type="SUPFAM" id="SSF103481">
    <property type="entry name" value="Multidrug resistance efflux transporter EmrE"/>
    <property type="match status" value="1"/>
</dbReference>
<sequence>MTSFAIYVLAALAEIAGCFGFWAWLRLGKSPAWAVLGVLSLVIFALLLTRIEAGAAGRAFAAYGGVYIIASLAWMQVVEGARPDRWDLIGGVICLAGAALILFGPRTN</sequence>
<name>Y2055_CAUVN</name>
<gene>
    <name type="ordered locus">CCNA_02055</name>
</gene>
<protein>
    <recommendedName>
        <fullName evidence="1">UPF0060 membrane protein CCNA_02055</fullName>
    </recommendedName>
</protein>
<comment type="subcellular location">
    <subcellularLocation>
        <location evidence="1">Cell inner membrane</location>
        <topology evidence="1">Multi-pass membrane protein</topology>
    </subcellularLocation>
</comment>
<comment type="similarity">
    <text evidence="1">Belongs to the UPF0060 family.</text>
</comment>
<keyword id="KW-0997">Cell inner membrane</keyword>
<keyword id="KW-1003">Cell membrane</keyword>
<keyword id="KW-0472">Membrane</keyword>
<keyword id="KW-1185">Reference proteome</keyword>
<keyword id="KW-0812">Transmembrane</keyword>
<keyword id="KW-1133">Transmembrane helix</keyword>
<proteinExistence type="inferred from homology"/>
<organism>
    <name type="scientific">Caulobacter vibrioides (strain NA1000 / CB15N)</name>
    <name type="common">Caulobacter crescentus</name>
    <dbReference type="NCBI Taxonomy" id="565050"/>
    <lineage>
        <taxon>Bacteria</taxon>
        <taxon>Pseudomonadati</taxon>
        <taxon>Pseudomonadota</taxon>
        <taxon>Alphaproteobacteria</taxon>
        <taxon>Caulobacterales</taxon>
        <taxon>Caulobacteraceae</taxon>
        <taxon>Caulobacter</taxon>
    </lineage>
</organism>